<keyword id="KW-1003">Cell membrane</keyword>
<keyword id="KW-1015">Disulfide bond</keyword>
<keyword id="KW-0301">Gamma-carboxyglutamic acid</keyword>
<keyword id="KW-0472">Membrane</keyword>
<keyword id="KW-1185">Reference proteome</keyword>
<keyword id="KW-0732">Signal</keyword>
<keyword id="KW-0812">Transmembrane</keyword>
<keyword id="KW-1133">Transmembrane helix</keyword>
<gene>
    <name type="primary">Prrg2</name>
    <name type="synonym">N4wbp1</name>
</gene>
<feature type="signal peptide" evidence="3">
    <location>
        <begin position="1"/>
        <end position="17"/>
    </location>
</feature>
<feature type="propeptide" id="PRO_0000022545" evidence="1">
    <location>
        <begin position="18"/>
        <end position="51"/>
    </location>
</feature>
<feature type="chain" id="PRO_0000022546" description="Transmembrane gamma-carboxyglutamic acid protein 2">
    <location>
        <begin position="52"/>
        <end position="198"/>
    </location>
</feature>
<feature type="topological domain" description="Extracellular" evidence="3">
    <location>
        <begin position="52"/>
        <end position="111"/>
    </location>
</feature>
<feature type="transmembrane region" description="Helical" evidence="3">
    <location>
        <begin position="112"/>
        <end position="132"/>
    </location>
</feature>
<feature type="topological domain" description="Cytoplasmic" evidence="3">
    <location>
        <begin position="133"/>
        <end position="198"/>
    </location>
</feature>
<feature type="domain" description="Gla" evidence="4">
    <location>
        <begin position="52"/>
        <end position="98"/>
    </location>
</feature>
<feature type="region of interest" description="Disordered" evidence="5">
    <location>
        <begin position="156"/>
        <end position="198"/>
    </location>
</feature>
<feature type="short sequence motif" description="LPXY motif; mediates binding to WW domain-containing proteins" evidence="2">
    <location>
        <begin position="171"/>
        <end position="174"/>
    </location>
</feature>
<feature type="short sequence motif" description="PPXY motif; mediates binding to WW domain-containing proteins" evidence="2">
    <location>
        <begin position="188"/>
        <end position="191"/>
    </location>
</feature>
<feature type="compositionally biased region" description="Pro residues" evidence="5">
    <location>
        <begin position="162"/>
        <end position="171"/>
    </location>
</feature>
<feature type="modified residue" description="4-carboxyglutamate" evidence="4">
    <location>
        <position position="72"/>
    </location>
</feature>
<feature type="disulfide bond" evidence="4">
    <location>
        <begin position="69"/>
        <end position="74"/>
    </location>
</feature>
<feature type="mutagenesis site" description="No effect on interaction with NEDD4." evidence="6">
    <original>Y</original>
    <variation>A</variation>
    <location>
        <position position="191"/>
    </location>
</feature>
<proteinExistence type="evidence at protein level"/>
<comment type="subunit">
    <text evidence="2 6">Interacts with NEDD4 (PubMed:11042109). Interacts with transcriptional coactivator YAP1 (By similarity).</text>
</comment>
<comment type="interaction">
    <interactant intactId="EBI-6304055">
        <id>Q8R182</id>
    </interactant>
    <interactant intactId="EBI-773516">
        <id>P46935</id>
        <label>Nedd4</label>
    </interactant>
    <organismsDiffer>false</organismsDiffer>
    <experiments>5</experiments>
</comment>
<comment type="subcellular location">
    <subcellularLocation>
        <location evidence="2">Cell membrane</location>
        <topology evidence="3">Single-pass type I membrane protein</topology>
    </subcellularLocation>
</comment>
<comment type="PTM">
    <text evidence="4">Gamma-carboxyglutamate residues are formed by vitamin K dependent carboxylation. These residues are essential for the binding of calcium.</text>
</comment>
<evidence type="ECO:0000250" key="1"/>
<evidence type="ECO:0000250" key="2">
    <source>
        <dbReference type="UniProtKB" id="O14669"/>
    </source>
</evidence>
<evidence type="ECO:0000255" key="3"/>
<evidence type="ECO:0000255" key="4">
    <source>
        <dbReference type="PROSITE-ProRule" id="PRU00463"/>
    </source>
</evidence>
<evidence type="ECO:0000256" key="5">
    <source>
        <dbReference type="SAM" id="MobiDB-lite"/>
    </source>
</evidence>
<evidence type="ECO:0000269" key="6">
    <source>
    </source>
</evidence>
<organism>
    <name type="scientific">Mus musculus</name>
    <name type="common">Mouse</name>
    <dbReference type="NCBI Taxonomy" id="10090"/>
    <lineage>
        <taxon>Eukaryota</taxon>
        <taxon>Metazoa</taxon>
        <taxon>Chordata</taxon>
        <taxon>Craniata</taxon>
        <taxon>Vertebrata</taxon>
        <taxon>Euteleostomi</taxon>
        <taxon>Mammalia</taxon>
        <taxon>Eutheria</taxon>
        <taxon>Euarchontoglires</taxon>
        <taxon>Glires</taxon>
        <taxon>Rodentia</taxon>
        <taxon>Myomorpha</taxon>
        <taxon>Muroidea</taxon>
        <taxon>Muridae</taxon>
        <taxon>Murinae</taxon>
        <taxon>Mus</taxon>
        <taxon>Mus</taxon>
    </lineage>
</organism>
<protein>
    <recommendedName>
        <fullName>Transmembrane gamma-carboxyglutamic acid protein 2</fullName>
    </recommendedName>
    <alternativeName>
        <fullName>NEDD4 WW domain-binding protein 1</fullName>
    </alternativeName>
    <alternativeName>
        <fullName>Proline-rich gamma-carboxyglutamic acid protein 2</fullName>
        <shortName>Proline-rich Gla protein 2</shortName>
    </alternativeName>
</protein>
<reference key="1">
    <citation type="journal article" date="2004" name="Genome Res.">
        <title>The status, quality, and expansion of the NIH full-length cDNA project: the Mammalian Gene Collection (MGC).</title>
        <authorList>
            <consortium name="The MGC Project Team"/>
        </authorList>
    </citation>
    <scope>NUCLEOTIDE SEQUENCE [LARGE SCALE MRNA]</scope>
    <source>
        <tissue>Liver</tissue>
    </source>
</reference>
<reference key="2">
    <citation type="journal article" date="2000" name="Biochem. J.">
        <title>Identification of multiple proteins expressed in murine embryos as binding partners for the WW domains of the ubiquitin-protein ligase Nedd4.</title>
        <authorList>
            <person name="Jolliffe C.N."/>
            <person name="Harvey K.F."/>
            <person name="Haines B.P."/>
            <person name="Parasivam G."/>
            <person name="Kumar S."/>
        </authorList>
    </citation>
    <scope>NUCLEOTIDE SEQUENCE [MRNA] OF 114-198</scope>
    <scope>MUTAGENESIS OF TYR-191</scope>
    <scope>INTERACTION WITH NEDD4</scope>
</reference>
<dbReference type="EMBL" id="BC025098">
    <property type="protein sequence ID" value="AAH25098.1"/>
    <property type="molecule type" value="mRNA"/>
</dbReference>
<dbReference type="EMBL" id="AF220205">
    <property type="protein sequence ID" value="AAG44244.1"/>
    <property type="molecule type" value="mRNA"/>
</dbReference>
<dbReference type="CCDS" id="CCDS21227.1"/>
<dbReference type="RefSeq" id="NP_001405962.1">
    <property type="nucleotide sequence ID" value="NM_001419033.1"/>
</dbReference>
<dbReference type="RefSeq" id="NP_001405963.1">
    <property type="nucleotide sequence ID" value="NM_001419034.1"/>
</dbReference>
<dbReference type="RefSeq" id="NP_075375.1">
    <property type="nucleotide sequence ID" value="NM_022999.2"/>
</dbReference>
<dbReference type="RefSeq" id="XP_006541125.1">
    <property type="nucleotide sequence ID" value="XM_006541062.2"/>
</dbReference>
<dbReference type="RefSeq" id="XP_006541126.1">
    <property type="nucleotide sequence ID" value="XM_006541063.2"/>
</dbReference>
<dbReference type="RefSeq" id="XP_011249190.1">
    <property type="nucleotide sequence ID" value="XM_011250888.1"/>
</dbReference>
<dbReference type="SMR" id="Q8R182"/>
<dbReference type="BioGRID" id="211139">
    <property type="interactions" value="1"/>
</dbReference>
<dbReference type="FunCoup" id="Q8R182">
    <property type="interactions" value="250"/>
</dbReference>
<dbReference type="IntAct" id="Q8R182">
    <property type="interactions" value="1"/>
</dbReference>
<dbReference type="STRING" id="10090.ENSMUSP00000148014"/>
<dbReference type="iPTMnet" id="Q8R182"/>
<dbReference type="PhosphoSitePlus" id="Q8R182"/>
<dbReference type="PaxDb" id="10090-ENSMUSP00000103464"/>
<dbReference type="ProteomicsDB" id="259577"/>
<dbReference type="Antibodypedia" id="2418">
    <property type="antibodies" value="69 antibodies from 25 providers"/>
</dbReference>
<dbReference type="DNASU" id="65116"/>
<dbReference type="Ensembl" id="ENSMUST00000007981.9">
    <property type="protein sequence ID" value="ENSMUSP00000007981.4"/>
    <property type="gene ID" value="ENSMUSG00000007837.12"/>
</dbReference>
<dbReference type="Ensembl" id="ENSMUST00000210690.2">
    <property type="protein sequence ID" value="ENSMUSP00000148014.2"/>
    <property type="gene ID" value="ENSMUSG00000007837.12"/>
</dbReference>
<dbReference type="GeneID" id="65116"/>
<dbReference type="KEGG" id="mmu:65116"/>
<dbReference type="UCSC" id="uc009gsv.1">
    <property type="organism name" value="mouse"/>
</dbReference>
<dbReference type="AGR" id="MGI:1929596"/>
<dbReference type="CTD" id="5639"/>
<dbReference type="MGI" id="MGI:1929596">
    <property type="gene designation" value="Prrg2"/>
</dbReference>
<dbReference type="VEuPathDB" id="HostDB:ENSMUSG00000007837"/>
<dbReference type="eggNOG" id="ENOG502RZZF">
    <property type="taxonomic scope" value="Eukaryota"/>
</dbReference>
<dbReference type="GeneTree" id="ENSGT00950000183084"/>
<dbReference type="InParanoid" id="Q8R182"/>
<dbReference type="OMA" id="IYCYKAK"/>
<dbReference type="OrthoDB" id="9379732at2759"/>
<dbReference type="PhylomeDB" id="Q8R182"/>
<dbReference type="TreeFam" id="TF332123"/>
<dbReference type="BioGRID-ORCS" id="65116">
    <property type="hits" value="2 hits in 77 CRISPR screens"/>
</dbReference>
<dbReference type="PRO" id="PR:Q8R182"/>
<dbReference type="Proteomes" id="UP000000589">
    <property type="component" value="Chromosome 7"/>
</dbReference>
<dbReference type="RNAct" id="Q8R182">
    <property type="molecule type" value="protein"/>
</dbReference>
<dbReference type="Bgee" id="ENSMUSG00000007837">
    <property type="expression patterns" value="Expressed in lip and 184 other cell types or tissues"/>
</dbReference>
<dbReference type="ExpressionAtlas" id="Q8R182">
    <property type="expression patterns" value="baseline and differential"/>
</dbReference>
<dbReference type="GO" id="GO:0005576">
    <property type="term" value="C:extracellular region"/>
    <property type="evidence" value="ECO:0007669"/>
    <property type="project" value="InterPro"/>
</dbReference>
<dbReference type="GO" id="GO:0016020">
    <property type="term" value="C:membrane"/>
    <property type="evidence" value="ECO:0000304"/>
    <property type="project" value="MGI"/>
</dbReference>
<dbReference type="GO" id="GO:0005886">
    <property type="term" value="C:plasma membrane"/>
    <property type="evidence" value="ECO:0000250"/>
    <property type="project" value="UniProtKB"/>
</dbReference>
<dbReference type="GO" id="GO:0005509">
    <property type="term" value="F:calcium ion binding"/>
    <property type="evidence" value="ECO:0007669"/>
    <property type="project" value="InterPro"/>
</dbReference>
<dbReference type="FunFam" id="4.10.740.10:FF:000001">
    <property type="entry name" value="vitamin K-dependent protein S"/>
    <property type="match status" value="1"/>
</dbReference>
<dbReference type="Gene3D" id="4.10.740.10">
    <property type="entry name" value="Coagulation Factor IX"/>
    <property type="match status" value="1"/>
</dbReference>
<dbReference type="InterPro" id="IPR017857">
    <property type="entry name" value="Coagulation_fac-like_Gla_dom"/>
</dbReference>
<dbReference type="InterPro" id="IPR035972">
    <property type="entry name" value="GLA-like_dom_SF"/>
</dbReference>
<dbReference type="InterPro" id="IPR000294">
    <property type="entry name" value="GLA_domain"/>
</dbReference>
<dbReference type="InterPro" id="IPR050442">
    <property type="entry name" value="Peptidase_S1_coag_factors"/>
</dbReference>
<dbReference type="PANTHER" id="PTHR24278">
    <property type="entry name" value="COAGULATION FACTOR"/>
    <property type="match status" value="1"/>
</dbReference>
<dbReference type="PANTHER" id="PTHR24278:SF30">
    <property type="entry name" value="TRANSMEMBRANE GAMMA-CARBOXYGLUTAMIC ACID PROTEIN 2"/>
    <property type="match status" value="1"/>
</dbReference>
<dbReference type="Pfam" id="PF00594">
    <property type="entry name" value="Gla"/>
    <property type="match status" value="1"/>
</dbReference>
<dbReference type="PRINTS" id="PR00001">
    <property type="entry name" value="GLABLOOD"/>
</dbReference>
<dbReference type="SMART" id="SM00069">
    <property type="entry name" value="GLA"/>
    <property type="match status" value="1"/>
</dbReference>
<dbReference type="SUPFAM" id="SSF57630">
    <property type="entry name" value="GLA-domain"/>
    <property type="match status" value="1"/>
</dbReference>
<dbReference type="PROSITE" id="PS00011">
    <property type="entry name" value="GLA_1"/>
    <property type="match status" value="1"/>
</dbReference>
<dbReference type="PROSITE" id="PS50998">
    <property type="entry name" value="GLA_2"/>
    <property type="match status" value="1"/>
</dbReference>
<name>TMG2_MOUSE</name>
<sequence length="198" mass="22369">MRGRPSLLLVYMGLATCLDTSPHREQNQVLDIFLDAPEAQSFLVGRRRFPRANHWDLELLTPGNLERECLEERCSWEEAREYFEDNTLTERFWESYTYNGKGGRGRVDVAGLAVGLTSGILLIVLAGLGAFWYLHYRRRRLRGQESCLQETGLIIPLSPQTPQSPPLPPGLPTYEQALAASGVHDAPPPPYSSLRRPH</sequence>
<accession>Q8R182</accession>
<accession>Q9EQI2</accession>